<evidence type="ECO:0000250" key="1"/>
<evidence type="ECO:0000255" key="2">
    <source>
        <dbReference type="PROSITE-ProRule" id="PRU00842"/>
    </source>
</evidence>
<evidence type="ECO:0000255" key="3">
    <source>
        <dbReference type="PROSITE-ProRule" id="PRU00843"/>
    </source>
</evidence>
<evidence type="ECO:0000303" key="4">
    <source>
    </source>
</evidence>
<evidence type="ECO:0000305" key="5"/>
<evidence type="ECO:0000312" key="6">
    <source>
        <dbReference type="FlyBase" id="FBgn0000116"/>
    </source>
</evidence>
<organism>
    <name type="scientific">Drosophila melanogaster</name>
    <name type="common">Fruit fly</name>
    <dbReference type="NCBI Taxonomy" id="7227"/>
    <lineage>
        <taxon>Eukaryota</taxon>
        <taxon>Metazoa</taxon>
        <taxon>Ecdysozoa</taxon>
        <taxon>Arthropoda</taxon>
        <taxon>Hexapoda</taxon>
        <taxon>Insecta</taxon>
        <taxon>Pterygota</taxon>
        <taxon>Neoptera</taxon>
        <taxon>Endopterygota</taxon>
        <taxon>Diptera</taxon>
        <taxon>Brachycera</taxon>
        <taxon>Muscomorpha</taxon>
        <taxon>Ephydroidea</taxon>
        <taxon>Drosophilidae</taxon>
        <taxon>Drosophila</taxon>
        <taxon>Sophophora</taxon>
    </lineage>
</organism>
<dbReference type="EC" id="2.7.3.3"/>
<dbReference type="EMBL" id="U26939">
    <property type="protein sequence ID" value="AAA68172.1"/>
    <property type="molecule type" value="Genomic_DNA"/>
</dbReference>
<dbReference type="EMBL" id="U26940">
    <property type="protein sequence ID" value="AAA68173.1"/>
    <property type="molecule type" value="mRNA"/>
</dbReference>
<dbReference type="EMBL" id="AE014296">
    <property type="protein sequence ID" value="AAF50325.2"/>
    <property type="molecule type" value="Genomic_DNA"/>
</dbReference>
<dbReference type="EMBL" id="AE014296">
    <property type="protein sequence ID" value="AAF50326.2"/>
    <property type="molecule type" value="Genomic_DNA"/>
</dbReference>
<dbReference type="EMBL" id="AE014296">
    <property type="protein sequence ID" value="AAN11982.1"/>
    <property type="molecule type" value="Genomic_DNA"/>
</dbReference>
<dbReference type="EMBL" id="AE014296">
    <property type="protein sequence ID" value="AAN11983.1"/>
    <property type="molecule type" value="Genomic_DNA"/>
</dbReference>
<dbReference type="EMBL" id="AY069099">
    <property type="protein sequence ID" value="AAL39244.1"/>
    <property type="molecule type" value="mRNA"/>
</dbReference>
<dbReference type="RefSeq" id="NP_001097556.2">
    <molecule id="P48610-1"/>
    <property type="nucleotide sequence ID" value="NM_001104086.2"/>
</dbReference>
<dbReference type="RefSeq" id="NP_001286989.1">
    <molecule id="P48610-1"/>
    <property type="nucleotide sequence ID" value="NM_001300060.1"/>
</dbReference>
<dbReference type="RefSeq" id="NP_523988.2">
    <molecule id="P48610-1"/>
    <property type="nucleotide sequence ID" value="NM_079264.3"/>
</dbReference>
<dbReference type="RefSeq" id="NP_729446.1">
    <molecule id="P48610-2"/>
    <property type="nucleotide sequence ID" value="NM_168311.3"/>
</dbReference>
<dbReference type="RefSeq" id="NP_729447.1">
    <molecule id="P48610-3"/>
    <property type="nucleotide sequence ID" value="NM_168312.3"/>
</dbReference>
<dbReference type="RefSeq" id="NP_729448.1">
    <molecule id="P48610-4"/>
    <property type="nucleotide sequence ID" value="NM_168313.4"/>
</dbReference>
<dbReference type="SMR" id="P48610"/>
<dbReference type="BioGRID" id="64445">
    <property type="interactions" value="80"/>
</dbReference>
<dbReference type="FunCoup" id="P48610">
    <property type="interactions" value="228"/>
</dbReference>
<dbReference type="IntAct" id="P48610">
    <property type="interactions" value="148"/>
</dbReference>
<dbReference type="STRING" id="7227.FBpp0076270"/>
<dbReference type="PaxDb" id="7227-FBpp0076270"/>
<dbReference type="DNASU" id="39041"/>
<dbReference type="EnsemblMetazoa" id="FBtr0076543">
    <molecule id="P48610-2"/>
    <property type="protein sequence ID" value="FBpp0076270"/>
    <property type="gene ID" value="FBgn0000116"/>
</dbReference>
<dbReference type="EnsemblMetazoa" id="FBtr0076544">
    <molecule id="P48610-3"/>
    <property type="protein sequence ID" value="FBpp0076271"/>
    <property type="gene ID" value="FBgn0000116"/>
</dbReference>
<dbReference type="EnsemblMetazoa" id="FBtr0076545">
    <molecule id="P48610-1"/>
    <property type="protein sequence ID" value="FBpp0076272"/>
    <property type="gene ID" value="FBgn0000116"/>
</dbReference>
<dbReference type="EnsemblMetazoa" id="FBtr0076546">
    <molecule id="P48610-4"/>
    <property type="protein sequence ID" value="FBpp0076273"/>
    <property type="gene ID" value="FBgn0000116"/>
</dbReference>
<dbReference type="EnsemblMetazoa" id="FBtr0331550">
    <molecule id="P48610-1"/>
    <property type="protein sequence ID" value="FBpp0303940"/>
    <property type="gene ID" value="FBgn0000116"/>
</dbReference>
<dbReference type="EnsemblMetazoa" id="FBtr0345030">
    <molecule id="P48610-1"/>
    <property type="protein sequence ID" value="FBpp0311280"/>
    <property type="gene ID" value="FBgn0000116"/>
</dbReference>
<dbReference type="GeneID" id="39041"/>
<dbReference type="KEGG" id="dme:Dmel_CG32031"/>
<dbReference type="AGR" id="FB:FBgn0000116"/>
<dbReference type="CTD" id="39041"/>
<dbReference type="FlyBase" id="FBgn0000116">
    <property type="gene designation" value="Argk1"/>
</dbReference>
<dbReference type="VEuPathDB" id="VectorBase:FBgn0000116"/>
<dbReference type="eggNOG" id="KOG3581">
    <property type="taxonomic scope" value="Eukaryota"/>
</dbReference>
<dbReference type="GeneTree" id="ENSGT00950000182772"/>
<dbReference type="HOGENOM" id="CLU_019868_0_0_1"/>
<dbReference type="InParanoid" id="P48610"/>
<dbReference type="OMA" id="GYAKLQA"/>
<dbReference type="OrthoDB" id="430219at2759"/>
<dbReference type="PhylomeDB" id="P48610"/>
<dbReference type="BRENDA" id="2.7.3.3">
    <property type="organism ID" value="1994"/>
</dbReference>
<dbReference type="SignaLink" id="P48610"/>
<dbReference type="BioGRID-ORCS" id="39041">
    <property type="hits" value="0 hits in 3 CRISPR screens"/>
</dbReference>
<dbReference type="ChiTaRS" id="Argk">
    <property type="organism name" value="fly"/>
</dbReference>
<dbReference type="GenomeRNAi" id="39041"/>
<dbReference type="PRO" id="PR:P48610"/>
<dbReference type="Proteomes" id="UP000000803">
    <property type="component" value="Chromosome 3L"/>
</dbReference>
<dbReference type="Bgee" id="FBgn0000116">
    <property type="expression patterns" value="Expressed in transmedullary neuron Tm5c (Drosophila) in brain and 294 other cell types or tissues"/>
</dbReference>
<dbReference type="ExpressionAtlas" id="P48610">
    <property type="expression patterns" value="baseline and differential"/>
</dbReference>
<dbReference type="GO" id="GO:0005737">
    <property type="term" value="C:cytoplasm"/>
    <property type="evidence" value="ECO:0007005"/>
    <property type="project" value="FlyBase"/>
</dbReference>
<dbReference type="GO" id="GO:0005829">
    <property type="term" value="C:cytosol"/>
    <property type="evidence" value="ECO:0007005"/>
    <property type="project" value="FlyBase"/>
</dbReference>
<dbReference type="GO" id="GO:0005576">
    <property type="term" value="C:extracellular region"/>
    <property type="evidence" value="ECO:0007005"/>
    <property type="project" value="FlyBase"/>
</dbReference>
<dbReference type="GO" id="GO:0005615">
    <property type="term" value="C:extracellular space"/>
    <property type="evidence" value="ECO:0000318"/>
    <property type="project" value="GO_Central"/>
</dbReference>
<dbReference type="GO" id="GO:0005739">
    <property type="term" value="C:mitochondrion"/>
    <property type="evidence" value="ECO:0000250"/>
    <property type="project" value="FlyBase"/>
</dbReference>
<dbReference type="GO" id="GO:0005886">
    <property type="term" value="C:plasma membrane"/>
    <property type="evidence" value="ECO:0007005"/>
    <property type="project" value="FlyBase"/>
</dbReference>
<dbReference type="GO" id="GO:0004054">
    <property type="term" value="F:arginine kinase activity"/>
    <property type="evidence" value="ECO:0000250"/>
    <property type="project" value="UniProtKB"/>
</dbReference>
<dbReference type="GO" id="GO:0005524">
    <property type="term" value="F:ATP binding"/>
    <property type="evidence" value="ECO:0007669"/>
    <property type="project" value="UniProtKB-KW"/>
</dbReference>
<dbReference type="GO" id="GO:0004111">
    <property type="term" value="F:creatine kinase activity"/>
    <property type="evidence" value="ECO:0000250"/>
    <property type="project" value="FlyBase"/>
</dbReference>
<dbReference type="GO" id="GO:0016301">
    <property type="term" value="F:kinase activity"/>
    <property type="evidence" value="ECO:0000318"/>
    <property type="project" value="GO_Central"/>
</dbReference>
<dbReference type="GO" id="GO:0046314">
    <property type="term" value="P:phosphocreatine biosynthetic process"/>
    <property type="evidence" value="ECO:0000250"/>
    <property type="project" value="FlyBase"/>
</dbReference>
<dbReference type="GO" id="GO:0016310">
    <property type="term" value="P:phosphorylation"/>
    <property type="evidence" value="ECO:0000250"/>
    <property type="project" value="UniProtKB"/>
</dbReference>
<dbReference type="CDD" id="cd07932">
    <property type="entry name" value="arginine_kinase_like"/>
    <property type="match status" value="1"/>
</dbReference>
<dbReference type="FunFam" id="3.30.590.10:FF:000006">
    <property type="entry name" value="Arginine kinase 1"/>
    <property type="match status" value="1"/>
</dbReference>
<dbReference type="FunFam" id="1.10.135.10:FF:000003">
    <property type="entry name" value="Three-domain arginine kinase"/>
    <property type="match status" value="1"/>
</dbReference>
<dbReference type="Gene3D" id="1.10.135.10">
    <property type="entry name" value="ATP:guanido phosphotransferase, N-terminal domain"/>
    <property type="match status" value="1"/>
</dbReference>
<dbReference type="Gene3D" id="3.30.590.10">
    <property type="entry name" value="Glutamine synthetase/guanido kinase, catalytic domain"/>
    <property type="match status" value="1"/>
</dbReference>
<dbReference type="InterPro" id="IPR000749">
    <property type="entry name" value="ATP-guanido_PTrfase"/>
</dbReference>
<dbReference type="InterPro" id="IPR022415">
    <property type="entry name" value="ATP-guanido_PTrfase_AS"/>
</dbReference>
<dbReference type="InterPro" id="IPR022414">
    <property type="entry name" value="ATP-guanido_PTrfase_cat"/>
</dbReference>
<dbReference type="InterPro" id="IPR022413">
    <property type="entry name" value="ATP-guanido_PTrfase_N"/>
</dbReference>
<dbReference type="InterPro" id="IPR036802">
    <property type="entry name" value="ATP-guanido_PTrfase_N_sf"/>
</dbReference>
<dbReference type="InterPro" id="IPR014746">
    <property type="entry name" value="Gln_synth/guanido_kin_cat_dom"/>
</dbReference>
<dbReference type="PANTHER" id="PTHR11547:SF38">
    <property type="entry name" value="ARGININE KINASE 1-RELATED"/>
    <property type="match status" value="1"/>
</dbReference>
<dbReference type="PANTHER" id="PTHR11547">
    <property type="entry name" value="ARGININE OR CREATINE KINASE"/>
    <property type="match status" value="1"/>
</dbReference>
<dbReference type="Pfam" id="PF00217">
    <property type="entry name" value="ATP-gua_Ptrans"/>
    <property type="match status" value="1"/>
</dbReference>
<dbReference type="Pfam" id="PF02807">
    <property type="entry name" value="ATP-gua_PtransN"/>
    <property type="match status" value="1"/>
</dbReference>
<dbReference type="SUPFAM" id="SSF55931">
    <property type="entry name" value="Glutamine synthetase/guanido kinase"/>
    <property type="match status" value="1"/>
</dbReference>
<dbReference type="SUPFAM" id="SSF48034">
    <property type="entry name" value="Guanido kinase N-terminal domain"/>
    <property type="match status" value="1"/>
</dbReference>
<dbReference type="PROSITE" id="PS00112">
    <property type="entry name" value="PHOSPHAGEN_KINASE"/>
    <property type="match status" value="1"/>
</dbReference>
<dbReference type="PROSITE" id="PS51510">
    <property type="entry name" value="PHOSPHAGEN_KINASE_C"/>
    <property type="match status" value="1"/>
</dbReference>
<dbReference type="PROSITE" id="PS51509">
    <property type="entry name" value="PHOSPHAGEN_KINASE_N"/>
    <property type="match status" value="1"/>
</dbReference>
<protein>
    <recommendedName>
        <fullName evidence="6">Arginine kinase 1</fullName>
        <ecNumber>2.7.3.3</ecNumber>
    </recommendedName>
</protein>
<keyword id="KW-0025">Alternative splicing</keyword>
<keyword id="KW-0067">ATP-binding</keyword>
<keyword id="KW-0418">Kinase</keyword>
<keyword id="KW-0547">Nucleotide-binding</keyword>
<keyword id="KW-1185">Reference proteome</keyword>
<keyword id="KW-0808">Transferase</keyword>
<feature type="chain" id="PRO_0000211992" description="Arginine kinase 1">
    <location>
        <begin position="1"/>
        <end position="356"/>
    </location>
</feature>
<feature type="domain" description="Phosphagen kinase N-terminal" evidence="2">
    <location>
        <begin position="6"/>
        <end position="91"/>
    </location>
</feature>
<feature type="domain" description="Phosphagen kinase C-terminal" evidence="3">
    <location>
        <begin position="119"/>
        <end position="356"/>
    </location>
</feature>
<feature type="binding site" evidence="1">
    <location>
        <begin position="64"/>
        <end position="68"/>
    </location>
    <ligand>
        <name>substrate</name>
    </ligand>
</feature>
<feature type="binding site" evidence="3">
    <location>
        <begin position="122"/>
        <end position="126"/>
    </location>
    <ligand>
        <name>ATP</name>
        <dbReference type="ChEBI" id="CHEBI:30616"/>
    </ligand>
</feature>
<feature type="binding site" evidence="3">
    <location>
        <position position="185"/>
    </location>
    <ligand>
        <name>ATP</name>
        <dbReference type="ChEBI" id="CHEBI:30616"/>
    </ligand>
</feature>
<feature type="binding site" evidence="1">
    <location>
        <position position="225"/>
    </location>
    <ligand>
        <name>substrate</name>
    </ligand>
</feature>
<feature type="binding site" evidence="3">
    <location>
        <position position="229"/>
    </location>
    <ligand>
        <name>ATP</name>
        <dbReference type="ChEBI" id="CHEBI:30616"/>
    </ligand>
</feature>
<feature type="binding site" evidence="1">
    <location>
        <position position="271"/>
    </location>
    <ligand>
        <name>substrate</name>
    </ligand>
</feature>
<feature type="binding site" evidence="3">
    <location>
        <begin position="280"/>
        <end position="284"/>
    </location>
    <ligand>
        <name>ATP</name>
        <dbReference type="ChEBI" id="CHEBI:30616"/>
    </ligand>
</feature>
<feature type="binding site" evidence="3">
    <location>
        <begin position="309"/>
        <end position="314"/>
    </location>
    <ligand>
        <name>ATP</name>
        <dbReference type="ChEBI" id="CHEBI:30616"/>
    </ligand>
</feature>
<feature type="binding site" evidence="1">
    <location>
        <position position="314"/>
    </location>
    <ligand>
        <name>substrate</name>
    </ligand>
</feature>
<feature type="splice variant" id="VSP_013807" description="In isoform A." evidence="4">
    <original>M</original>
    <variation>MFALWYLTFAVDEIRKRLAWLFSSNKPAAPALDNKPANPAPAKESAPAPAPAPTPKPAVVPPAPKPDPPKPAPAVAKPTPVPVPATAPAPPKEEPAPKPKPEPVPSPVVAPPKPTPPPAKPSSPPKQADKMPIPLPKSLTEANTNGQNGNAANGGNVDELVFGGQQAEKVLPAAKEASNDFIKGETNAFIQSIKEAQQLGERKQDTM</variation>
    <location>
        <position position="1"/>
    </location>
</feature>
<feature type="splice variant" id="VSP_013808" description="In isoform B." evidence="5">
    <original>M</original>
    <variation>MPIPLPKSLTEANTNGQNGNAANGGNVDELVFGGQQAEKVLPAAKEASNDFIKGETNAFIQSIKEAQQLGERKQDTM</variation>
    <location>
        <position position="1"/>
    </location>
</feature>
<feature type="splice variant" id="VSP_013809" description="In isoform C." evidence="5">
    <original>M</original>
    <variation>MGLCASKDKKEKVIEGEVANGEPNGTATAAGAGGDGKQDTM</variation>
    <location>
        <position position="1"/>
    </location>
</feature>
<feature type="sequence conflict" description="In Ref. 1; AAA68173." evidence="5" ref="1">
    <location>
        <begin position="1"/>
        <end position="90"/>
    </location>
</feature>
<feature type="sequence conflict" description="In Ref. 1; AAA68172." evidence="5" ref="1">
    <original>VTPTFKSTLL</original>
    <variation>GHAHLQVDPA</variation>
    <location>
        <begin position="42"/>
        <end position="51"/>
    </location>
</feature>
<feature type="sequence conflict" description="In Ref. 1; AAA68172." evidence="5" ref="1">
    <original>GVG</original>
    <variation>ASA</variation>
    <location>
        <begin position="64"/>
        <end position="66"/>
    </location>
</feature>
<feature type="sequence conflict" description="In Ref. 1; AAA68172." evidence="5" ref="1">
    <original>I</original>
    <variation>F</variation>
    <location>
        <position position="85"/>
    </location>
</feature>
<feature type="sequence conflict" description="In Ref. 1; AAA68172." evidence="5" ref="1">
    <original>R</original>
    <variation>L</variation>
    <location>
        <position position="280"/>
    </location>
</feature>
<feature type="sequence conflict" description="In Ref. 1; AAA68172." evidence="5" ref="1">
    <original>A</original>
    <variation>P</variation>
    <location>
        <position position="291"/>
    </location>
</feature>
<feature type="sequence conflict" description="In Ref. 1; AAA68172." evidence="5" ref="1">
    <original>RGTRG</original>
    <variation>ANPR</variation>
    <location>
        <begin position="309"/>
        <end position="313"/>
    </location>
</feature>
<feature type="sequence conflict" description="In Ref. 1; AAA68172." evidence="5" ref="1">
    <original>V</original>
    <variation>S</variation>
    <location>
        <position position="322"/>
    </location>
</feature>
<gene>
    <name evidence="6" type="primary">Argk1</name>
    <name evidence="6" type="synonym">AK</name>
    <name evidence="6" type="synonym">Argk</name>
    <name evidence="6" type="ORF">CG32031</name>
</gene>
<accession>P48610</accession>
<accession>Q8IQB9</accession>
<accession>Q8IQC0</accession>
<accession>Q8T0S2</accession>
<accession>Q9VST5</accession>
<accession>Q9VST6</accession>
<name>KARG_DROME</name>
<comment type="catalytic activity">
    <reaction>
        <text>L-arginine + ATP = N(omega)-phospho-L-arginine + ADP + H(+)</text>
        <dbReference type="Rhea" id="RHEA:22940"/>
        <dbReference type="ChEBI" id="CHEBI:15378"/>
        <dbReference type="ChEBI" id="CHEBI:30616"/>
        <dbReference type="ChEBI" id="CHEBI:32682"/>
        <dbReference type="ChEBI" id="CHEBI:58477"/>
        <dbReference type="ChEBI" id="CHEBI:456216"/>
        <dbReference type="EC" id="2.7.3.3"/>
    </reaction>
</comment>
<comment type="alternative products">
    <event type="alternative splicing"/>
    <isoform>
        <id>P48610-1</id>
        <name>D</name>
        <sequence type="displayed"/>
    </isoform>
    <isoform>
        <id>P48610-2</id>
        <name>A</name>
        <sequence type="described" ref="VSP_013807"/>
    </isoform>
    <isoform>
        <id>P48610-3</id>
        <name>B</name>
        <sequence type="described" ref="VSP_013808"/>
    </isoform>
    <isoform>
        <id>P48610-4</id>
        <name>C</name>
        <sequence type="described" ref="VSP_013809"/>
    </isoform>
</comment>
<comment type="similarity">
    <text evidence="2 3">Belongs to the ATP:guanido phosphotransferase family.</text>
</comment>
<sequence>MVDAAVLAKLEEGYAKLAASDSKSLLKKYLTKEVFDNLKNKVTPTFKSTLLDVIQSGLENHDSGVGIYAPDAEAYTVFADLFDPIIEDYHGGFKKTDKHPASNFGDVSTFGNVDPTNEYVISTRVRCGRSMQGYPFNPCLTEAQYKEMESKVSSTLSGLEGELKGKFYPLTGMEKAVQQQLIDDHFLFKEGDRFLQAANACRFWPSGRGIYHNDAKTFLVWCNEEDHLRIISMQQGGDLGQIYKRLVTAVNEIEKRVPFSHDDRLGFLTFCPTNLGTTIRASVHIKVPKLASNKAKLEEVAAKYNLQVRGTRGEHTEAEGGVYDISNKRRMGLTEFEAVKEMYDGITELIKLEKSL</sequence>
<reference key="1">
    <citation type="submission" date="1995-05" db="EMBL/GenBank/DDBJ databases">
        <authorList>
            <person name="Hecht L.B."/>
            <person name="Scott L.M."/>
            <person name="Collier G.E."/>
        </authorList>
    </citation>
    <scope>NUCLEOTIDE SEQUENCE [GENOMIC DNA / MRNA] (ISOFORM D)</scope>
</reference>
<reference key="2">
    <citation type="journal article" date="2000" name="Science">
        <title>The genome sequence of Drosophila melanogaster.</title>
        <authorList>
            <person name="Adams M.D."/>
            <person name="Celniker S.E."/>
            <person name="Holt R.A."/>
            <person name="Evans C.A."/>
            <person name="Gocayne J.D."/>
            <person name="Amanatides P.G."/>
            <person name="Scherer S.E."/>
            <person name="Li P.W."/>
            <person name="Hoskins R.A."/>
            <person name="Galle R.F."/>
            <person name="George R.A."/>
            <person name="Lewis S.E."/>
            <person name="Richards S."/>
            <person name="Ashburner M."/>
            <person name="Henderson S.N."/>
            <person name="Sutton G.G."/>
            <person name="Wortman J.R."/>
            <person name="Yandell M.D."/>
            <person name="Zhang Q."/>
            <person name="Chen L.X."/>
            <person name="Brandon R.C."/>
            <person name="Rogers Y.-H.C."/>
            <person name="Blazej R.G."/>
            <person name="Champe M."/>
            <person name="Pfeiffer B.D."/>
            <person name="Wan K.H."/>
            <person name="Doyle C."/>
            <person name="Baxter E.G."/>
            <person name="Helt G."/>
            <person name="Nelson C.R."/>
            <person name="Miklos G.L.G."/>
            <person name="Abril J.F."/>
            <person name="Agbayani A."/>
            <person name="An H.-J."/>
            <person name="Andrews-Pfannkoch C."/>
            <person name="Baldwin D."/>
            <person name="Ballew R.M."/>
            <person name="Basu A."/>
            <person name="Baxendale J."/>
            <person name="Bayraktaroglu L."/>
            <person name="Beasley E.M."/>
            <person name="Beeson K.Y."/>
            <person name="Benos P.V."/>
            <person name="Berman B.P."/>
            <person name="Bhandari D."/>
            <person name="Bolshakov S."/>
            <person name="Borkova D."/>
            <person name="Botchan M.R."/>
            <person name="Bouck J."/>
            <person name="Brokstein P."/>
            <person name="Brottier P."/>
            <person name="Burtis K.C."/>
            <person name="Busam D.A."/>
            <person name="Butler H."/>
            <person name="Cadieu E."/>
            <person name="Center A."/>
            <person name="Chandra I."/>
            <person name="Cherry J.M."/>
            <person name="Cawley S."/>
            <person name="Dahlke C."/>
            <person name="Davenport L.B."/>
            <person name="Davies P."/>
            <person name="de Pablos B."/>
            <person name="Delcher A."/>
            <person name="Deng Z."/>
            <person name="Mays A.D."/>
            <person name="Dew I."/>
            <person name="Dietz S.M."/>
            <person name="Dodson K."/>
            <person name="Doup L.E."/>
            <person name="Downes M."/>
            <person name="Dugan-Rocha S."/>
            <person name="Dunkov B.C."/>
            <person name="Dunn P."/>
            <person name="Durbin K.J."/>
            <person name="Evangelista C.C."/>
            <person name="Ferraz C."/>
            <person name="Ferriera S."/>
            <person name="Fleischmann W."/>
            <person name="Fosler C."/>
            <person name="Gabrielian A.E."/>
            <person name="Garg N.S."/>
            <person name="Gelbart W.M."/>
            <person name="Glasser K."/>
            <person name="Glodek A."/>
            <person name="Gong F."/>
            <person name="Gorrell J.H."/>
            <person name="Gu Z."/>
            <person name="Guan P."/>
            <person name="Harris M."/>
            <person name="Harris N.L."/>
            <person name="Harvey D.A."/>
            <person name="Heiman T.J."/>
            <person name="Hernandez J.R."/>
            <person name="Houck J."/>
            <person name="Hostin D."/>
            <person name="Houston K.A."/>
            <person name="Howland T.J."/>
            <person name="Wei M.-H."/>
            <person name="Ibegwam C."/>
            <person name="Jalali M."/>
            <person name="Kalush F."/>
            <person name="Karpen G.H."/>
            <person name="Ke Z."/>
            <person name="Kennison J.A."/>
            <person name="Ketchum K.A."/>
            <person name="Kimmel B.E."/>
            <person name="Kodira C.D."/>
            <person name="Kraft C.L."/>
            <person name="Kravitz S."/>
            <person name="Kulp D."/>
            <person name="Lai Z."/>
            <person name="Lasko P."/>
            <person name="Lei Y."/>
            <person name="Levitsky A.A."/>
            <person name="Li J.H."/>
            <person name="Li Z."/>
            <person name="Liang Y."/>
            <person name="Lin X."/>
            <person name="Liu X."/>
            <person name="Mattei B."/>
            <person name="McIntosh T.C."/>
            <person name="McLeod M.P."/>
            <person name="McPherson D."/>
            <person name="Merkulov G."/>
            <person name="Milshina N.V."/>
            <person name="Mobarry C."/>
            <person name="Morris J."/>
            <person name="Moshrefi A."/>
            <person name="Mount S.M."/>
            <person name="Moy M."/>
            <person name="Murphy B."/>
            <person name="Murphy L."/>
            <person name="Muzny D.M."/>
            <person name="Nelson D.L."/>
            <person name="Nelson D.R."/>
            <person name="Nelson K.A."/>
            <person name="Nixon K."/>
            <person name="Nusskern D.R."/>
            <person name="Pacleb J.M."/>
            <person name="Palazzolo M."/>
            <person name="Pittman G.S."/>
            <person name="Pan S."/>
            <person name="Pollard J."/>
            <person name="Puri V."/>
            <person name="Reese M.G."/>
            <person name="Reinert K."/>
            <person name="Remington K."/>
            <person name="Saunders R.D.C."/>
            <person name="Scheeler F."/>
            <person name="Shen H."/>
            <person name="Shue B.C."/>
            <person name="Siden-Kiamos I."/>
            <person name="Simpson M."/>
            <person name="Skupski M.P."/>
            <person name="Smith T.J."/>
            <person name="Spier E."/>
            <person name="Spradling A.C."/>
            <person name="Stapleton M."/>
            <person name="Strong R."/>
            <person name="Sun E."/>
            <person name="Svirskas R."/>
            <person name="Tector C."/>
            <person name="Turner R."/>
            <person name="Venter E."/>
            <person name="Wang A.H."/>
            <person name="Wang X."/>
            <person name="Wang Z.-Y."/>
            <person name="Wassarman D.A."/>
            <person name="Weinstock G.M."/>
            <person name="Weissenbach J."/>
            <person name="Williams S.M."/>
            <person name="Woodage T."/>
            <person name="Worley K.C."/>
            <person name="Wu D."/>
            <person name="Yang S."/>
            <person name="Yao Q.A."/>
            <person name="Ye J."/>
            <person name="Yeh R.-F."/>
            <person name="Zaveri J.S."/>
            <person name="Zhan M."/>
            <person name="Zhang G."/>
            <person name="Zhao Q."/>
            <person name="Zheng L."/>
            <person name="Zheng X.H."/>
            <person name="Zhong F.N."/>
            <person name="Zhong W."/>
            <person name="Zhou X."/>
            <person name="Zhu S.C."/>
            <person name="Zhu X."/>
            <person name="Smith H.O."/>
            <person name="Gibbs R.A."/>
            <person name="Myers E.W."/>
            <person name="Rubin G.M."/>
            <person name="Venter J.C."/>
        </authorList>
    </citation>
    <scope>NUCLEOTIDE SEQUENCE [LARGE SCALE GENOMIC DNA]</scope>
    <source>
        <strain>Berkeley</strain>
    </source>
</reference>
<reference key="3">
    <citation type="journal article" date="2002" name="Genome Biol.">
        <title>Annotation of the Drosophila melanogaster euchromatic genome: a systematic review.</title>
        <authorList>
            <person name="Misra S."/>
            <person name="Crosby M.A."/>
            <person name="Mungall C.J."/>
            <person name="Matthews B.B."/>
            <person name="Campbell K.S."/>
            <person name="Hradecky P."/>
            <person name="Huang Y."/>
            <person name="Kaminker J.S."/>
            <person name="Millburn G.H."/>
            <person name="Prochnik S.E."/>
            <person name="Smith C.D."/>
            <person name="Tupy J.L."/>
            <person name="Whitfield E.J."/>
            <person name="Bayraktaroglu L."/>
            <person name="Berman B.P."/>
            <person name="Bettencourt B.R."/>
            <person name="Celniker S.E."/>
            <person name="de Grey A.D.N.J."/>
            <person name="Drysdale R.A."/>
            <person name="Harris N.L."/>
            <person name="Richter J."/>
            <person name="Russo S."/>
            <person name="Schroeder A.J."/>
            <person name="Shu S.Q."/>
            <person name="Stapleton M."/>
            <person name="Yamada C."/>
            <person name="Ashburner M."/>
            <person name="Gelbart W.M."/>
            <person name="Rubin G.M."/>
            <person name="Lewis S.E."/>
        </authorList>
    </citation>
    <scope>GENOME REANNOTATION</scope>
    <source>
        <strain>Berkeley</strain>
    </source>
</reference>
<reference key="4">
    <citation type="journal article" date="2002" name="Genome Biol.">
        <title>A Drosophila full-length cDNA resource.</title>
        <authorList>
            <person name="Stapleton M."/>
            <person name="Carlson J.W."/>
            <person name="Brokstein P."/>
            <person name="Yu C."/>
            <person name="Champe M."/>
            <person name="George R.A."/>
            <person name="Guarin H."/>
            <person name="Kronmiller B."/>
            <person name="Pacleb J.M."/>
            <person name="Park S."/>
            <person name="Wan K.H."/>
            <person name="Rubin G.M."/>
            <person name="Celniker S.E."/>
        </authorList>
    </citation>
    <scope>NUCLEOTIDE SEQUENCE [LARGE SCALE MRNA] (ISOFORM A)</scope>
    <source>
        <strain>Berkeley</strain>
        <tissue>Head</tissue>
    </source>
</reference>
<proteinExistence type="evidence at transcript level"/>